<protein>
    <recommendedName>
        <fullName evidence="6">Spliceosome-associated protein CWC27 homolog</fullName>
    </recommendedName>
    <alternativeName>
        <fullName evidence="2">Probable inactive peptidyl-prolyl cis-trans isomerase CWC27 homolog</fullName>
        <shortName evidence="2">PPIase CWC27</shortName>
    </alternativeName>
</protein>
<sequence length="473" mass="53966">MSNIYIQEPPTNGKVLLKTTAGDIDIELWSKEAPKACRNFIQLCLEAYYDNTIFHRVVPGFIVQGGDPTGTGSGGESIYGAPFKDEFHSRLRFNRRGLVAMANAGSHDNGSQFFFTLGRADELNNKHTIFGKVTGDTVYNMLRLSEVDIDDEERPHNPHKIKSCEVLFNPFDDIIPREIKRPKKEKPEEEVKKLKPKGTKNFSLLSFGEEAEEEEEEVNRVSQSMKGKSKSSHDLLKDDPHLSSVPVVESEKGDAAGDLDDDGEDESAEYDEYVDGDEKNLMRERIAKKLKKDTSANVKSAGEGEVEKKSVSRSEELRKEARQLKRELLAAKQKKVENEAKQAEKRSEEEEATPDGAVAEYRREKQKYEALRKQQSKKGTSREDQTLALLNQFKSKLTQAIAETPENDIPETEVEDDEGWMSHVLQFEDKSRKVKDASMQDSDTFEIYDPRNPVNKRRREESKKLMREKKERR</sequence>
<organism>
    <name type="scientific">Macaca fascicularis</name>
    <name type="common">Crab-eating macaque</name>
    <name type="synonym">Cynomolgus monkey</name>
    <dbReference type="NCBI Taxonomy" id="9541"/>
    <lineage>
        <taxon>Eukaryota</taxon>
        <taxon>Metazoa</taxon>
        <taxon>Chordata</taxon>
        <taxon>Craniata</taxon>
        <taxon>Vertebrata</taxon>
        <taxon>Euteleostomi</taxon>
        <taxon>Mammalia</taxon>
        <taxon>Eutheria</taxon>
        <taxon>Euarchontoglires</taxon>
        <taxon>Primates</taxon>
        <taxon>Haplorrhini</taxon>
        <taxon>Catarrhini</taxon>
        <taxon>Cercopithecidae</taxon>
        <taxon>Cercopithecinae</taxon>
        <taxon>Macaca</taxon>
    </lineage>
</organism>
<reference key="1">
    <citation type="submission" date="2005-06" db="EMBL/GenBank/DDBJ databases">
        <title>DNA sequences of macaque genes expressed in brain or testis and its evolutionary implications.</title>
        <authorList>
            <consortium name="International consortium for macaque cDNA sequencing and analysis"/>
        </authorList>
    </citation>
    <scope>NUCLEOTIDE SEQUENCE [LARGE SCALE MRNA]</scope>
    <source>
        <tissue>Testis</tissue>
    </source>
</reference>
<gene>
    <name evidence="2" type="primary">CWC27</name>
    <name type="synonym">SDCCAG10</name>
    <name evidence="7" type="ORF">QtsA-12191</name>
    <name evidence="8" type="ORF">QtsA-16612</name>
</gene>
<evidence type="ECO:0000250" key="1">
    <source>
        <dbReference type="UniProtKB" id="Q5XIB2"/>
    </source>
</evidence>
<evidence type="ECO:0000250" key="2">
    <source>
        <dbReference type="UniProtKB" id="Q6UX04"/>
    </source>
</evidence>
<evidence type="ECO:0000255" key="3"/>
<evidence type="ECO:0000255" key="4">
    <source>
        <dbReference type="PROSITE-ProRule" id="PRU00156"/>
    </source>
</evidence>
<evidence type="ECO:0000256" key="5">
    <source>
        <dbReference type="SAM" id="MobiDB-lite"/>
    </source>
</evidence>
<evidence type="ECO:0000305" key="6"/>
<evidence type="ECO:0000312" key="7">
    <source>
        <dbReference type="EMBL" id="BAE00558.1"/>
    </source>
</evidence>
<evidence type="ECO:0000312" key="8">
    <source>
        <dbReference type="EMBL" id="BAE01111.1"/>
    </source>
</evidence>
<name>CWC27_MACFA</name>
<comment type="function">
    <text evidence="2">As part of the spliceosome, plays a role in pre-mRNA splicing. Probable inactive PPIase with no peptidyl-prolyl cis-trans isomerase activity. As a component of the minor spliceosome, involved in the splicing of U12-type introns in pre-mRNAs (By similarity).</text>
</comment>
<comment type="subunit">
    <text evidence="2">Part of the activated spliceosome B/catalytic step 1 spliceosome, one of the forms of the spliceosome which has a well-formed active site but still cannot catalyze the branching reaction and is composed at least of 52 proteins, the U2, U5 and U6 snRNAs and the pre-mRNA. Recruited during early steps of activated spliceosome B maturation, it is probably one of the first proteins released from this complex as he matures to the spliceosome C complex. Component of the minor spliceosome, which splices U12-type introns (By similarity).</text>
</comment>
<comment type="subcellular location">
    <subcellularLocation>
        <location evidence="2">Nucleus</location>
    </subcellularLocation>
</comment>
<comment type="similarity">
    <text evidence="6">Belongs to the cyclophilin-type PPIase family.</text>
</comment>
<comment type="caution">
    <text evidence="2">Despite the fact that it belongs to the cyclophilin-type PPIase family, it has probably no peptidyl-prolyl cis-trans isomerase activity.</text>
</comment>
<dbReference type="EMBL" id="AB168438">
    <property type="protein sequence ID" value="BAE00558.1"/>
    <property type="molecule type" value="mRNA"/>
</dbReference>
<dbReference type="EMBL" id="AB169016">
    <property type="protein sequence ID" value="BAE01111.1"/>
    <property type="molecule type" value="mRNA"/>
</dbReference>
<dbReference type="RefSeq" id="NP_001272747.1">
    <property type="nucleotide sequence ID" value="NM_001285818.1"/>
</dbReference>
<dbReference type="RefSeq" id="XP_045249712.1">
    <property type="nucleotide sequence ID" value="XM_045393777.2"/>
</dbReference>
<dbReference type="SMR" id="Q4R713"/>
<dbReference type="STRING" id="9541.ENSMFAP00000013030"/>
<dbReference type="GeneID" id="102123812"/>
<dbReference type="VEuPathDB" id="HostDB:ENSMFAG00000027257"/>
<dbReference type="eggNOG" id="KOG0415">
    <property type="taxonomic scope" value="Eukaryota"/>
</dbReference>
<dbReference type="eggNOG" id="KOG0885">
    <property type="taxonomic scope" value="Eukaryota"/>
</dbReference>
<dbReference type="OMA" id="DDWYDVY"/>
<dbReference type="Proteomes" id="UP000233100">
    <property type="component" value="Chromosome 6"/>
</dbReference>
<dbReference type="GO" id="GO:0071013">
    <property type="term" value="C:catalytic step 2 spliceosome"/>
    <property type="evidence" value="ECO:0007669"/>
    <property type="project" value="TreeGrafter"/>
</dbReference>
<dbReference type="GO" id="GO:0071005">
    <property type="term" value="C:U2-type precatalytic spliceosome"/>
    <property type="evidence" value="ECO:0000250"/>
    <property type="project" value="UniProtKB"/>
</dbReference>
<dbReference type="GO" id="GO:0003755">
    <property type="term" value="F:peptidyl-prolyl cis-trans isomerase activity"/>
    <property type="evidence" value="ECO:0007669"/>
    <property type="project" value="InterPro"/>
</dbReference>
<dbReference type="GO" id="GO:0006457">
    <property type="term" value="P:protein folding"/>
    <property type="evidence" value="ECO:0007669"/>
    <property type="project" value="InterPro"/>
</dbReference>
<dbReference type="CDD" id="cd22288">
    <property type="entry name" value="CWC27_CTD"/>
    <property type="match status" value="1"/>
</dbReference>
<dbReference type="CDD" id="cd01925">
    <property type="entry name" value="cyclophilin_CeCYP16-like"/>
    <property type="match status" value="1"/>
</dbReference>
<dbReference type="FunFam" id="2.40.100.10:FF:000007">
    <property type="entry name" value="Peptidyl-prolyl cis-trans isomerase CWC27 homolog"/>
    <property type="match status" value="1"/>
</dbReference>
<dbReference type="Gene3D" id="2.40.100.10">
    <property type="entry name" value="Cyclophilin-like"/>
    <property type="match status" value="1"/>
</dbReference>
<dbReference type="InterPro" id="IPR029000">
    <property type="entry name" value="Cyclophilin-like_dom_sf"/>
</dbReference>
<dbReference type="InterPro" id="IPR020892">
    <property type="entry name" value="Cyclophilin-type_PPIase_CS"/>
</dbReference>
<dbReference type="InterPro" id="IPR002130">
    <property type="entry name" value="Cyclophilin-type_PPIase_dom"/>
</dbReference>
<dbReference type="InterPro" id="IPR044666">
    <property type="entry name" value="Cyclophilin_A-like"/>
</dbReference>
<dbReference type="PANTHER" id="PTHR45625">
    <property type="entry name" value="PEPTIDYL-PROLYL CIS-TRANS ISOMERASE-RELATED"/>
    <property type="match status" value="1"/>
</dbReference>
<dbReference type="PANTHER" id="PTHR45625:SF6">
    <property type="entry name" value="SPLICEOSOME-ASSOCIATED PROTEIN CWC27 HOMOLOG"/>
    <property type="match status" value="1"/>
</dbReference>
<dbReference type="Pfam" id="PF00160">
    <property type="entry name" value="Pro_isomerase"/>
    <property type="match status" value="1"/>
</dbReference>
<dbReference type="PRINTS" id="PR00153">
    <property type="entry name" value="CSAPPISMRASE"/>
</dbReference>
<dbReference type="SUPFAM" id="SSF50891">
    <property type="entry name" value="Cyclophilin-like"/>
    <property type="match status" value="1"/>
</dbReference>
<dbReference type="PROSITE" id="PS00170">
    <property type="entry name" value="CSA_PPIASE_1"/>
    <property type="match status" value="1"/>
</dbReference>
<dbReference type="PROSITE" id="PS50072">
    <property type="entry name" value="CSA_PPIASE_2"/>
    <property type="match status" value="1"/>
</dbReference>
<feature type="initiator methionine" description="Removed" evidence="2">
    <location>
        <position position="1"/>
    </location>
</feature>
<feature type="chain" id="PRO_0000313648" description="Spliceosome-associated protein CWC27 homolog">
    <location>
        <begin position="2"/>
        <end position="473"/>
    </location>
</feature>
<feature type="domain" description="PPIase cyclophilin-type" evidence="4">
    <location>
        <begin position="11"/>
        <end position="166"/>
    </location>
</feature>
<feature type="region of interest" description="Disordered" evidence="5">
    <location>
        <begin position="177"/>
        <end position="386"/>
    </location>
</feature>
<feature type="region of interest" description="Disordered" evidence="5">
    <location>
        <begin position="399"/>
        <end position="473"/>
    </location>
</feature>
<feature type="coiled-coil region" evidence="3">
    <location>
        <begin position="206"/>
        <end position="230"/>
    </location>
</feature>
<feature type="coiled-coil region" evidence="3">
    <location>
        <begin position="307"/>
        <end position="378"/>
    </location>
</feature>
<feature type="compositionally biased region" description="Basic and acidic residues" evidence="5">
    <location>
        <begin position="177"/>
        <end position="193"/>
    </location>
</feature>
<feature type="compositionally biased region" description="Basic and acidic residues" evidence="5">
    <location>
        <begin position="231"/>
        <end position="241"/>
    </location>
</feature>
<feature type="compositionally biased region" description="Acidic residues" evidence="5">
    <location>
        <begin position="257"/>
        <end position="275"/>
    </location>
</feature>
<feature type="compositionally biased region" description="Basic and acidic residues" evidence="5">
    <location>
        <begin position="276"/>
        <end position="287"/>
    </location>
</feature>
<feature type="compositionally biased region" description="Basic and acidic residues" evidence="5">
    <location>
        <begin position="305"/>
        <end position="348"/>
    </location>
</feature>
<feature type="compositionally biased region" description="Basic and acidic residues" evidence="5">
    <location>
        <begin position="360"/>
        <end position="372"/>
    </location>
</feature>
<feature type="compositionally biased region" description="Acidic residues" evidence="5">
    <location>
        <begin position="405"/>
        <end position="419"/>
    </location>
</feature>
<feature type="compositionally biased region" description="Basic and acidic residues" evidence="5">
    <location>
        <begin position="426"/>
        <end position="438"/>
    </location>
</feature>
<feature type="compositionally biased region" description="Basic and acidic residues" evidence="5">
    <location>
        <begin position="458"/>
        <end position="473"/>
    </location>
</feature>
<feature type="modified residue" description="N-acetylserine" evidence="2">
    <location>
        <position position="2"/>
    </location>
</feature>
<feature type="modified residue" description="Phosphoserine" evidence="1">
    <location>
        <position position="347"/>
    </location>
</feature>
<feature type="sequence conflict" description="In Ref. 1; BAE00558." evidence="6" ref="1">
    <original>T</original>
    <variation>P</variation>
    <location>
        <position position="444"/>
    </location>
</feature>
<accession>Q4R713</accession>
<accession>Q4R8L4</accession>
<proteinExistence type="evidence at transcript level"/>
<keyword id="KW-0007">Acetylation</keyword>
<keyword id="KW-0175">Coiled coil</keyword>
<keyword id="KW-0539">Nucleus</keyword>
<keyword id="KW-0597">Phosphoprotein</keyword>
<keyword id="KW-1185">Reference proteome</keyword>